<gene>
    <name evidence="1" type="primary">nfo</name>
    <name type="ordered locus">GK2474</name>
</gene>
<evidence type="ECO:0000255" key="1">
    <source>
        <dbReference type="HAMAP-Rule" id="MF_00152"/>
    </source>
</evidence>
<evidence type="ECO:0007829" key="2">
    <source>
        <dbReference type="PDB" id="3AAL"/>
    </source>
</evidence>
<name>END4_GEOKA</name>
<feature type="chain" id="PRO_1000011307" description="Probable endonuclease 4">
    <location>
        <begin position="1"/>
        <end position="299"/>
    </location>
</feature>
<feature type="binding site" evidence="1">
    <location>
        <position position="69"/>
    </location>
    <ligand>
        <name>Zn(2+)</name>
        <dbReference type="ChEBI" id="CHEBI:29105"/>
        <label>1</label>
    </ligand>
</feature>
<feature type="binding site" evidence="1">
    <location>
        <position position="110"/>
    </location>
    <ligand>
        <name>Zn(2+)</name>
        <dbReference type="ChEBI" id="CHEBI:29105"/>
        <label>1</label>
    </ligand>
</feature>
<feature type="binding site" evidence="1">
    <location>
        <position position="145"/>
    </location>
    <ligand>
        <name>Zn(2+)</name>
        <dbReference type="ChEBI" id="CHEBI:29105"/>
        <label>1</label>
    </ligand>
</feature>
<feature type="binding site" evidence="1">
    <location>
        <position position="145"/>
    </location>
    <ligand>
        <name>Zn(2+)</name>
        <dbReference type="ChEBI" id="CHEBI:29105"/>
        <label>2</label>
    </ligand>
</feature>
<feature type="binding site" evidence="1">
    <location>
        <position position="179"/>
    </location>
    <ligand>
        <name>Zn(2+)</name>
        <dbReference type="ChEBI" id="CHEBI:29105"/>
        <label>2</label>
    </ligand>
</feature>
<feature type="binding site" evidence="1">
    <location>
        <position position="182"/>
    </location>
    <ligand>
        <name>Zn(2+)</name>
        <dbReference type="ChEBI" id="CHEBI:29105"/>
        <label>3</label>
    </ligand>
</feature>
<feature type="binding site" evidence="1">
    <location>
        <position position="214"/>
    </location>
    <ligand>
        <name>Zn(2+)</name>
        <dbReference type="ChEBI" id="CHEBI:29105"/>
        <label>2</label>
    </ligand>
</feature>
<feature type="binding site" evidence="1">
    <location>
        <position position="227"/>
    </location>
    <ligand>
        <name>Zn(2+)</name>
        <dbReference type="ChEBI" id="CHEBI:29105"/>
        <label>3</label>
    </ligand>
</feature>
<feature type="binding site" evidence="1">
    <location>
        <position position="229"/>
    </location>
    <ligand>
        <name>Zn(2+)</name>
        <dbReference type="ChEBI" id="CHEBI:29105"/>
        <label>3</label>
    </ligand>
</feature>
<feature type="binding site" evidence="1">
    <location>
        <position position="259"/>
    </location>
    <ligand>
        <name>Zn(2+)</name>
        <dbReference type="ChEBI" id="CHEBI:29105"/>
        <label>2</label>
    </ligand>
</feature>
<feature type="strand" evidence="2">
    <location>
        <begin position="4"/>
        <end position="7"/>
    </location>
</feature>
<feature type="turn" evidence="2">
    <location>
        <begin position="12"/>
        <end position="15"/>
    </location>
</feature>
<feature type="helix" evidence="2">
    <location>
        <begin position="16"/>
        <end position="25"/>
    </location>
</feature>
<feature type="strand" evidence="2">
    <location>
        <begin position="29"/>
        <end position="36"/>
    </location>
</feature>
<feature type="helix" evidence="2">
    <location>
        <begin position="47"/>
        <end position="49"/>
    </location>
</feature>
<feature type="helix" evidence="2">
    <location>
        <begin position="51"/>
        <end position="60"/>
    </location>
</feature>
<feature type="strand" evidence="2">
    <location>
        <begin position="65"/>
        <end position="69"/>
    </location>
</feature>
<feature type="helix" evidence="2">
    <location>
        <begin position="82"/>
        <end position="102"/>
    </location>
</feature>
<feature type="strand" evidence="2">
    <location>
        <begin position="105"/>
        <end position="109"/>
    </location>
</feature>
<feature type="helix" evidence="2">
    <location>
        <begin position="119"/>
        <end position="133"/>
    </location>
</feature>
<feature type="strand" evidence="2">
    <location>
        <begin position="141"/>
        <end position="145"/>
    </location>
</feature>
<feature type="helix" evidence="2">
    <location>
        <begin position="158"/>
        <end position="167"/>
    </location>
</feature>
<feature type="helix" evidence="2">
    <location>
        <begin position="171"/>
        <end position="173"/>
    </location>
</feature>
<feature type="strand" evidence="2">
    <location>
        <begin position="174"/>
        <end position="179"/>
    </location>
</feature>
<feature type="helix" evidence="2">
    <location>
        <begin position="180"/>
        <end position="186"/>
    </location>
</feature>
<feature type="helix" evidence="2">
    <location>
        <begin position="190"/>
        <end position="204"/>
    </location>
</feature>
<feature type="helix" evidence="2">
    <location>
        <begin position="207"/>
        <end position="209"/>
    </location>
</feature>
<feature type="strand" evidence="2">
    <location>
        <begin position="210"/>
        <end position="215"/>
    </location>
</feature>
<feature type="strand" evidence="2">
    <location>
        <begin position="217"/>
        <end position="220"/>
    </location>
</feature>
<feature type="strand" evidence="2">
    <location>
        <begin position="234"/>
        <end position="237"/>
    </location>
</feature>
<feature type="helix" evidence="2">
    <location>
        <begin position="239"/>
        <end position="246"/>
    </location>
</feature>
<feature type="strand" evidence="2">
    <location>
        <begin position="256"/>
        <end position="258"/>
    </location>
</feature>
<feature type="helix" evidence="2">
    <location>
        <begin position="274"/>
        <end position="283"/>
    </location>
</feature>
<feature type="helix" evidence="2">
    <location>
        <begin position="290"/>
        <end position="294"/>
    </location>
</feature>
<comment type="function">
    <text evidence="1">Endonuclease IV plays a role in DNA repair. It cleaves phosphodiester bonds at apurinic or apyrimidinic (AP) sites, generating a 3'-hydroxyl group and a 5'-terminal sugar phosphate.</text>
</comment>
<comment type="catalytic activity">
    <reaction evidence="1">
        <text>Endonucleolytic cleavage to 5'-phosphooligonucleotide end-products.</text>
        <dbReference type="EC" id="3.1.21.2"/>
    </reaction>
</comment>
<comment type="cofactor">
    <cofactor evidence="1">
        <name>Zn(2+)</name>
        <dbReference type="ChEBI" id="CHEBI:29105"/>
    </cofactor>
    <text evidence="1">Binds 3 Zn(2+) ions.</text>
</comment>
<comment type="similarity">
    <text evidence="1">Belongs to the AP endonuclease 2 family.</text>
</comment>
<proteinExistence type="evidence at protein level"/>
<dbReference type="EC" id="3.1.21.2" evidence="1"/>
<dbReference type="EMBL" id="BA000043">
    <property type="protein sequence ID" value="BAD76759.1"/>
    <property type="molecule type" value="Genomic_DNA"/>
</dbReference>
<dbReference type="RefSeq" id="WP_011231954.1">
    <property type="nucleotide sequence ID" value="NC_006510.1"/>
</dbReference>
<dbReference type="PDB" id="3AAL">
    <property type="method" value="X-ray"/>
    <property type="resolution" value="1.60 A"/>
    <property type="chains" value="A=1-299"/>
</dbReference>
<dbReference type="PDBsum" id="3AAL"/>
<dbReference type="SMR" id="Q5KX27"/>
<dbReference type="STRING" id="235909.GK2474"/>
<dbReference type="KEGG" id="gka:GK2474"/>
<dbReference type="PATRIC" id="fig|235909.7.peg.2649"/>
<dbReference type="eggNOG" id="COG0648">
    <property type="taxonomic scope" value="Bacteria"/>
</dbReference>
<dbReference type="HOGENOM" id="CLU_025885_4_1_9"/>
<dbReference type="BRENDA" id="4.2.99.18">
    <property type="organism ID" value="8138"/>
</dbReference>
<dbReference type="EvolutionaryTrace" id="Q5KX27"/>
<dbReference type="Proteomes" id="UP000001172">
    <property type="component" value="Chromosome"/>
</dbReference>
<dbReference type="GO" id="GO:0008833">
    <property type="term" value="F:deoxyribonuclease IV (phage-T4-induced) activity"/>
    <property type="evidence" value="ECO:0007669"/>
    <property type="project" value="UniProtKB-UniRule"/>
</dbReference>
<dbReference type="GO" id="GO:0003677">
    <property type="term" value="F:DNA binding"/>
    <property type="evidence" value="ECO:0007669"/>
    <property type="project" value="InterPro"/>
</dbReference>
<dbReference type="GO" id="GO:0003906">
    <property type="term" value="F:DNA-(apurinic or apyrimidinic site) endonuclease activity"/>
    <property type="evidence" value="ECO:0007669"/>
    <property type="project" value="TreeGrafter"/>
</dbReference>
<dbReference type="GO" id="GO:0008081">
    <property type="term" value="F:phosphoric diester hydrolase activity"/>
    <property type="evidence" value="ECO:0007669"/>
    <property type="project" value="TreeGrafter"/>
</dbReference>
<dbReference type="GO" id="GO:0008270">
    <property type="term" value="F:zinc ion binding"/>
    <property type="evidence" value="ECO:0007669"/>
    <property type="project" value="UniProtKB-UniRule"/>
</dbReference>
<dbReference type="GO" id="GO:0006284">
    <property type="term" value="P:base-excision repair"/>
    <property type="evidence" value="ECO:0007669"/>
    <property type="project" value="TreeGrafter"/>
</dbReference>
<dbReference type="CDD" id="cd00019">
    <property type="entry name" value="AP2Ec"/>
    <property type="match status" value="1"/>
</dbReference>
<dbReference type="FunFam" id="3.20.20.150:FF:000001">
    <property type="entry name" value="Probable endonuclease 4"/>
    <property type="match status" value="1"/>
</dbReference>
<dbReference type="Gene3D" id="3.20.20.150">
    <property type="entry name" value="Divalent-metal-dependent TIM barrel enzymes"/>
    <property type="match status" value="1"/>
</dbReference>
<dbReference type="HAMAP" id="MF_00152">
    <property type="entry name" value="Nfo"/>
    <property type="match status" value="1"/>
</dbReference>
<dbReference type="InterPro" id="IPR001719">
    <property type="entry name" value="AP_endonuc_2"/>
</dbReference>
<dbReference type="InterPro" id="IPR018246">
    <property type="entry name" value="AP_endonuc_F2_Zn_BS"/>
</dbReference>
<dbReference type="InterPro" id="IPR036237">
    <property type="entry name" value="Xyl_isomerase-like_sf"/>
</dbReference>
<dbReference type="InterPro" id="IPR013022">
    <property type="entry name" value="Xyl_isomerase-like_TIM-brl"/>
</dbReference>
<dbReference type="NCBIfam" id="TIGR00587">
    <property type="entry name" value="nfo"/>
    <property type="match status" value="1"/>
</dbReference>
<dbReference type="NCBIfam" id="NF002196">
    <property type="entry name" value="PRK01060.1-1"/>
    <property type="match status" value="1"/>
</dbReference>
<dbReference type="PANTHER" id="PTHR21445:SF0">
    <property type="entry name" value="APURINIC-APYRIMIDINIC ENDONUCLEASE"/>
    <property type="match status" value="1"/>
</dbReference>
<dbReference type="PANTHER" id="PTHR21445">
    <property type="entry name" value="ENDONUCLEASE IV ENDODEOXYRIBONUCLEASE IV"/>
    <property type="match status" value="1"/>
</dbReference>
<dbReference type="Pfam" id="PF01261">
    <property type="entry name" value="AP_endonuc_2"/>
    <property type="match status" value="1"/>
</dbReference>
<dbReference type="SMART" id="SM00518">
    <property type="entry name" value="AP2Ec"/>
    <property type="match status" value="1"/>
</dbReference>
<dbReference type="SUPFAM" id="SSF51658">
    <property type="entry name" value="Xylose isomerase-like"/>
    <property type="match status" value="1"/>
</dbReference>
<dbReference type="PROSITE" id="PS00729">
    <property type="entry name" value="AP_NUCLEASE_F2_1"/>
    <property type="match status" value="1"/>
</dbReference>
<dbReference type="PROSITE" id="PS00730">
    <property type="entry name" value="AP_NUCLEASE_F2_2"/>
    <property type="match status" value="1"/>
</dbReference>
<dbReference type="PROSITE" id="PS00731">
    <property type="entry name" value="AP_NUCLEASE_F2_3"/>
    <property type="match status" value="1"/>
</dbReference>
<dbReference type="PROSITE" id="PS51432">
    <property type="entry name" value="AP_NUCLEASE_F2_4"/>
    <property type="match status" value="1"/>
</dbReference>
<keyword id="KW-0002">3D-structure</keyword>
<keyword id="KW-0227">DNA damage</keyword>
<keyword id="KW-0234">DNA repair</keyword>
<keyword id="KW-0255">Endonuclease</keyword>
<keyword id="KW-0378">Hydrolase</keyword>
<keyword id="KW-0479">Metal-binding</keyword>
<keyword id="KW-0540">Nuclease</keyword>
<keyword id="KW-1185">Reference proteome</keyword>
<keyword id="KW-0862">Zinc</keyword>
<accession>Q5KX27</accession>
<reference key="1">
    <citation type="journal article" date="2004" name="Nucleic Acids Res.">
        <title>Thermoadaptation trait revealed by the genome sequence of thermophilic Geobacillus kaustophilus.</title>
        <authorList>
            <person name="Takami H."/>
            <person name="Takaki Y."/>
            <person name="Chee G.-J."/>
            <person name="Nishi S."/>
            <person name="Shimamura S."/>
            <person name="Suzuki H."/>
            <person name="Matsui S."/>
            <person name="Uchiyama I."/>
        </authorList>
    </citation>
    <scope>NUCLEOTIDE SEQUENCE [LARGE SCALE GENOMIC DNA]</scope>
    <source>
        <strain>HTA426</strain>
    </source>
</reference>
<organism>
    <name type="scientific">Geobacillus kaustophilus (strain HTA426)</name>
    <dbReference type="NCBI Taxonomy" id="235909"/>
    <lineage>
        <taxon>Bacteria</taxon>
        <taxon>Bacillati</taxon>
        <taxon>Bacillota</taxon>
        <taxon>Bacilli</taxon>
        <taxon>Bacillales</taxon>
        <taxon>Anoxybacillaceae</taxon>
        <taxon>Geobacillus</taxon>
        <taxon>Geobacillus thermoleovorans group</taxon>
    </lineage>
</organism>
<sequence>MLKIGSHVSMSGKKMLLAASEEAASYGANTFMIYTGAPQNTKRKSIEELNIEAGRQHMQAHGIEEIVVHAPYIINIGNTTNLDTFSLGVDFLRAEIERTEAIGAKQLVLHPGAHVGAGVEAGLRQIIRGLNEVLTREQNVQIALETMAGKGSECGRTFEELAYIIDGVAYNDKLSVCFDTCHTHDAGYDIVNDFDGVLEEFDRIIGLGRLKVLHINDSKNPRGSRKDRHENIGFGHIGFAALNYIVHHPQLEDIPKILETPYVGEDKNNKKPPYKHEIAMLRAQSFDDQLLEKINAGAE</sequence>
<protein>
    <recommendedName>
        <fullName evidence="1">Probable endonuclease 4</fullName>
        <ecNumber evidence="1">3.1.21.2</ecNumber>
    </recommendedName>
    <alternativeName>
        <fullName evidence="1">Endodeoxyribonuclease IV</fullName>
    </alternativeName>
    <alternativeName>
        <fullName evidence="1">Endonuclease IV</fullName>
    </alternativeName>
</protein>